<gene>
    <name type="ordered locus">Dda3937_02003</name>
</gene>
<comment type="subcellular location">
    <subcellularLocation>
        <location evidence="1">Cell inner membrane</location>
        <topology evidence="1">Multi-pass membrane protein</topology>
    </subcellularLocation>
</comment>
<comment type="similarity">
    <text evidence="4">To E.coli YhjD.</text>
</comment>
<evidence type="ECO:0000250" key="1"/>
<evidence type="ECO:0000255" key="2"/>
<evidence type="ECO:0000256" key="3">
    <source>
        <dbReference type="SAM" id="MobiDB-lite"/>
    </source>
</evidence>
<evidence type="ECO:0000305" key="4"/>
<accession>P45417</accession>
<accession>E0SFH0</accession>
<sequence length="328" mass="36130">MPVKPNQPRPSTKQDPSSGASRQRFGYVTGWLHRIRSVPAIAHFIRAGDRFNDRMGNQFGAAITYFSFLSLIPILMVSFATAGFVLASNPDLLTGLINRIVNSISDPSLARTLKNTVNTAVRQRTTVGLTGLLIALYSGVNWIGNLREAIHAQSRDVWERQPHEEEKIYLRYLWDFLSLIGLLLALVITLFLTSVAGSAQATIVRALGLNGIDWLRPVMTLIALSISIFANYLLFLWILWVLPRHNPRRGPLLRGTLMAAIGFEALKFAMTVALPELATSPSGAAFGSVIGLMTFFYFFARLTLFCAAWIATADPKTDINTQAPLPGA</sequence>
<name>Y2003_DICD3</name>
<organism>
    <name type="scientific">Dickeya dadantii (strain 3937)</name>
    <name type="common">Erwinia chrysanthemi (strain 3937)</name>
    <dbReference type="NCBI Taxonomy" id="198628"/>
    <lineage>
        <taxon>Bacteria</taxon>
        <taxon>Pseudomonadati</taxon>
        <taxon>Pseudomonadota</taxon>
        <taxon>Gammaproteobacteria</taxon>
        <taxon>Enterobacterales</taxon>
        <taxon>Pectobacteriaceae</taxon>
        <taxon>Dickeya</taxon>
    </lineage>
</organism>
<reference key="1">
    <citation type="journal article" date="1994" name="J. Bacteriol.">
        <title>Molecular characterization of the Erwinia chrysanthemi kdgK gene involved in pectin degradation.</title>
        <authorList>
            <person name="Hugouvieux-Cotte-Pattat N."/>
            <person name="Nasser W."/>
            <person name="Robert-Baudouy J."/>
        </authorList>
    </citation>
    <scope>NUCLEOTIDE SEQUENCE [GENOMIC DNA]</scope>
    <source>
        <strain>3937</strain>
    </source>
</reference>
<reference key="2">
    <citation type="journal article" date="2011" name="J. Bacteriol.">
        <title>Genome sequence of the plant-pathogenic bacterium Dickeya dadantii 3937.</title>
        <authorList>
            <person name="Glasner J.D."/>
            <person name="Yang C.H."/>
            <person name="Reverchon S."/>
            <person name="Hugouvieux-Cotte-Pattat N."/>
            <person name="Condemine G."/>
            <person name="Bohin J.P."/>
            <person name="Van Gijsegem F."/>
            <person name="Yang S."/>
            <person name="Franza T."/>
            <person name="Expert D."/>
            <person name="Plunkett G. III"/>
            <person name="San Francisco M.J."/>
            <person name="Charkowski A.O."/>
            <person name="Py B."/>
            <person name="Bell K."/>
            <person name="Rauscher L."/>
            <person name="Rodriguez-Palenzuela P."/>
            <person name="Toussaint A."/>
            <person name="Holeva M.C."/>
            <person name="He S.Y."/>
            <person name="Douet V."/>
            <person name="Boccara M."/>
            <person name="Blanco C."/>
            <person name="Toth I."/>
            <person name="Anderson B.D."/>
            <person name="Biehl B.S."/>
            <person name="Mau B."/>
            <person name="Flynn S.M."/>
            <person name="Barras F."/>
            <person name="Lindeberg M."/>
            <person name="Birch P.R."/>
            <person name="Tsuyumu S."/>
            <person name="Shi X."/>
            <person name="Hibbing M."/>
            <person name="Yap M.N."/>
            <person name="Carpentier M."/>
            <person name="Dassa E."/>
            <person name="Umehara M."/>
            <person name="Kim J.F."/>
            <person name="Rusch M."/>
            <person name="Soni P."/>
            <person name="Mayhew G.F."/>
            <person name="Fouts D.E."/>
            <person name="Gill S.R."/>
            <person name="Blattner F.R."/>
            <person name="Keen N.T."/>
            <person name="Perna N.T."/>
        </authorList>
    </citation>
    <scope>NUCLEOTIDE SEQUENCE [LARGE SCALE GENOMIC DNA]</scope>
    <source>
        <strain>3937</strain>
    </source>
</reference>
<feature type="chain" id="PRO_0000169571" description="Uncharacterized protein Dda3937_02003">
    <location>
        <begin position="1"/>
        <end position="328"/>
    </location>
</feature>
<feature type="transmembrane region" description="Helical" evidence="2">
    <location>
        <begin position="66"/>
        <end position="86"/>
    </location>
</feature>
<feature type="transmembrane region" description="Helical" evidence="2">
    <location>
        <begin position="126"/>
        <end position="146"/>
    </location>
</feature>
<feature type="transmembrane region" description="Helical" evidence="2">
    <location>
        <begin position="176"/>
        <end position="196"/>
    </location>
</feature>
<feature type="transmembrane region" description="Helical" evidence="2">
    <location>
        <begin position="221"/>
        <end position="241"/>
    </location>
</feature>
<feature type="transmembrane region" description="Helical" evidence="2">
    <location>
        <begin position="255"/>
        <end position="275"/>
    </location>
</feature>
<feature type="transmembrane region" description="Helical" evidence="2">
    <location>
        <begin position="290"/>
        <end position="310"/>
    </location>
</feature>
<feature type="region of interest" description="Disordered" evidence="3">
    <location>
        <begin position="1"/>
        <end position="22"/>
    </location>
</feature>
<feature type="compositionally biased region" description="Polar residues" evidence="3">
    <location>
        <begin position="9"/>
        <end position="21"/>
    </location>
</feature>
<feature type="sequence conflict" description="In Ref. 1; CAA52959." evidence="4" ref="1">
    <original>QR</original>
    <variation>HG</variation>
    <location>
        <begin position="123"/>
        <end position="124"/>
    </location>
</feature>
<feature type="sequence conflict" description="In Ref. 1; CAA52959." evidence="4" ref="1">
    <original>RLTLFCAAWI</original>
    <variation>PPDAVLRRLD</variation>
    <location>
        <begin position="301"/>
        <end position="310"/>
    </location>
</feature>
<dbReference type="EMBL" id="X75047">
    <property type="protein sequence ID" value="CAA52959.1"/>
    <property type="molecule type" value="Genomic_DNA"/>
</dbReference>
<dbReference type="EMBL" id="CP002038">
    <property type="protein sequence ID" value="ADM96341.1"/>
    <property type="molecule type" value="Genomic_DNA"/>
</dbReference>
<dbReference type="PIR" id="A55215">
    <property type="entry name" value="A55215"/>
</dbReference>
<dbReference type="RefSeq" id="WP_013315830.1">
    <property type="nucleotide sequence ID" value="NC_014500.1"/>
</dbReference>
<dbReference type="STRING" id="198628.Dda3937_02003"/>
<dbReference type="KEGG" id="ddd:Dda3937_02003"/>
<dbReference type="PATRIC" id="fig|198628.6.peg.129"/>
<dbReference type="eggNOG" id="COG1295">
    <property type="taxonomic scope" value="Bacteria"/>
</dbReference>
<dbReference type="HOGENOM" id="CLU_050028_0_1_6"/>
<dbReference type="OrthoDB" id="4127374at2"/>
<dbReference type="Proteomes" id="UP000006859">
    <property type="component" value="Chromosome"/>
</dbReference>
<dbReference type="GO" id="GO:0005886">
    <property type="term" value="C:plasma membrane"/>
    <property type="evidence" value="ECO:0007669"/>
    <property type="project" value="UniProtKB-SubCell"/>
</dbReference>
<dbReference type="InterPro" id="IPR005274">
    <property type="entry name" value="IM_pro_YhjD"/>
</dbReference>
<dbReference type="InterPro" id="IPR017039">
    <property type="entry name" value="Virul_fac_BrkB"/>
</dbReference>
<dbReference type="NCBIfam" id="TIGR00766">
    <property type="entry name" value="inner membrane protein YhjD"/>
    <property type="match status" value="1"/>
</dbReference>
<dbReference type="PANTHER" id="PTHR30213">
    <property type="entry name" value="INNER MEMBRANE PROTEIN YHJD"/>
    <property type="match status" value="1"/>
</dbReference>
<dbReference type="PANTHER" id="PTHR30213:SF1">
    <property type="entry name" value="INNER MEMBRANE PROTEIN YHJD"/>
    <property type="match status" value="1"/>
</dbReference>
<dbReference type="Pfam" id="PF03631">
    <property type="entry name" value="Virul_fac_BrkB"/>
    <property type="match status" value="1"/>
</dbReference>
<dbReference type="PIRSF" id="PIRSF035875">
    <property type="entry name" value="RNase_BN"/>
    <property type="match status" value="1"/>
</dbReference>
<protein>
    <recommendedName>
        <fullName>Uncharacterized protein Dda3937_02003</fullName>
    </recommendedName>
    <alternativeName>
        <fullName>K1 ORF</fullName>
    </alternativeName>
</protein>
<proteinExistence type="inferred from homology"/>
<keyword id="KW-0997">Cell inner membrane</keyword>
<keyword id="KW-1003">Cell membrane</keyword>
<keyword id="KW-0472">Membrane</keyword>
<keyword id="KW-1185">Reference proteome</keyword>
<keyword id="KW-0812">Transmembrane</keyword>
<keyword id="KW-1133">Transmembrane helix</keyword>